<feature type="signal peptide" evidence="1">
    <location>
        <begin position="1"/>
        <end position="18"/>
    </location>
</feature>
<feature type="chain" id="PRO_0000013614" description="Uncharacterized protein aq_532">
    <location>
        <begin position="19"/>
        <end position="221"/>
    </location>
</feature>
<evidence type="ECO:0000255" key="1"/>
<gene>
    <name type="ordered locus">aq_532</name>
</gene>
<reference key="1">
    <citation type="journal article" date="1998" name="Nature">
        <title>The complete genome of the hyperthermophilic bacterium Aquifex aeolicus.</title>
        <authorList>
            <person name="Deckert G."/>
            <person name="Warren P.V."/>
            <person name="Gaasterland T."/>
            <person name="Young W.G."/>
            <person name="Lenox A.L."/>
            <person name="Graham D.E."/>
            <person name="Overbeek R."/>
            <person name="Snead M.A."/>
            <person name="Keller M."/>
            <person name="Aujay M."/>
            <person name="Huber R."/>
            <person name="Feldman R.A."/>
            <person name="Short J.M."/>
            <person name="Olsen G.J."/>
            <person name="Swanson R.V."/>
        </authorList>
    </citation>
    <scope>NUCLEOTIDE SEQUENCE [LARGE SCALE GENOMIC DNA]</scope>
    <source>
        <strain>VF5</strain>
    </source>
</reference>
<accession>O66814</accession>
<dbReference type="EMBL" id="AE000657">
    <property type="protein sequence ID" value="AAC06777.1"/>
    <property type="molecule type" value="Genomic_DNA"/>
</dbReference>
<dbReference type="PIR" id="B70348">
    <property type="entry name" value="B70348"/>
</dbReference>
<dbReference type="RefSeq" id="NP_213374.1">
    <property type="nucleotide sequence ID" value="NC_000918.1"/>
</dbReference>
<dbReference type="RefSeq" id="WP_010880312.1">
    <property type="nucleotide sequence ID" value="NC_000918.1"/>
</dbReference>
<dbReference type="STRING" id="224324.aq_532"/>
<dbReference type="EnsemblBacteria" id="AAC06777">
    <property type="protein sequence ID" value="AAC06777"/>
    <property type="gene ID" value="aq_532"/>
</dbReference>
<dbReference type="KEGG" id="aae:aq_532"/>
<dbReference type="HOGENOM" id="CLU_1248500_0_0_0"/>
<dbReference type="InParanoid" id="O66814"/>
<dbReference type="Proteomes" id="UP000000798">
    <property type="component" value="Chromosome"/>
</dbReference>
<protein>
    <recommendedName>
        <fullName>Uncharacterized protein aq_532</fullName>
    </recommendedName>
</protein>
<sequence length="221" mass="26410">MKRFLLLIILFGISFSFVSDYLLRAESLFSQLKDANAKEETPYLYGKVKGYYEAIKLYAVEYKEDRIKTLFTLMSKNTKKAVRGAYTEREPLTELITFEPRVYFEEYCDGIMDECFYEKHYEKEKFIELVDYFSLKRRVEFLRNHEGKYCAPFDFGMAEALFNAVSLELMQEKPDEKVLIALREKLEPILVMAEEKLRYAMKKELPCYRNRLSEHIGYWKP</sequence>
<organism>
    <name type="scientific">Aquifex aeolicus (strain VF5)</name>
    <dbReference type="NCBI Taxonomy" id="224324"/>
    <lineage>
        <taxon>Bacteria</taxon>
        <taxon>Pseudomonadati</taxon>
        <taxon>Aquificota</taxon>
        <taxon>Aquificia</taxon>
        <taxon>Aquificales</taxon>
        <taxon>Aquificaceae</taxon>
        <taxon>Aquifex</taxon>
    </lineage>
</organism>
<name>Y532_AQUAE</name>
<proteinExistence type="inferred from homology"/>
<keyword id="KW-1185">Reference proteome</keyword>
<keyword id="KW-0732">Signal</keyword>